<protein>
    <recommendedName>
        <fullName>Bifunctional pinoresinol-lariciresinol reductase</fullName>
        <shortName>PLR-TP4</shortName>
    </recommendedName>
    <alternativeName>
        <fullName>(+)-lariciresinol reductase</fullName>
        <ecNumber>1.23.1.2</ecNumber>
    </alternativeName>
    <alternativeName>
        <fullName>(+)-pinoresinol reductase</fullName>
        <ecNumber>1.23.1.1</ecNumber>
    </alternativeName>
</protein>
<feature type="initiator methionine" description="Removed" evidence="1">
    <location>
        <position position="1"/>
    </location>
</feature>
<feature type="chain" id="PRO_0000422935" description="Bifunctional pinoresinol-lariciresinol reductase">
    <location>
        <begin position="2"/>
        <end position="312"/>
    </location>
</feature>
<feature type="active site" description="Proton acceptor" evidence="2">
    <location>
        <position position="138"/>
    </location>
</feature>
<feature type="binding site" evidence="2">
    <location>
        <begin position="11"/>
        <end position="17"/>
    </location>
    <ligand>
        <name>NADP(+)</name>
        <dbReference type="ChEBI" id="CHEBI:58349"/>
    </ligand>
</feature>
<feature type="binding site" evidence="2">
    <location>
        <position position="36"/>
    </location>
    <ligand>
        <name>NADP(+)</name>
        <dbReference type="ChEBI" id="CHEBI:58349"/>
    </ligand>
</feature>
<feature type="binding site" evidence="2">
    <location>
        <position position="45"/>
    </location>
    <ligand>
        <name>NADP(+)</name>
        <dbReference type="ChEBI" id="CHEBI:58349"/>
    </ligand>
</feature>
<feature type="binding site" evidence="2">
    <location>
        <position position="142"/>
    </location>
    <ligand>
        <name>NADP(+)</name>
        <dbReference type="ChEBI" id="CHEBI:58349"/>
    </ligand>
</feature>
<feature type="binding site" evidence="2">
    <location>
        <position position="270"/>
    </location>
    <ligand>
        <name>substrate</name>
    </ligand>
</feature>
<dbReference type="EC" id="1.23.1.2"/>
<dbReference type="EC" id="1.23.1.1"/>
<dbReference type="EMBL" id="AF242506">
    <property type="protein sequence ID" value="AAF63510.1"/>
    <property type="molecule type" value="mRNA"/>
</dbReference>
<dbReference type="SMR" id="Q9LD12"/>
<dbReference type="GO" id="GO:0010284">
    <property type="term" value="F:lariciresinol reductase activity"/>
    <property type="evidence" value="ECO:0007669"/>
    <property type="project" value="UniProtKB-EC"/>
</dbReference>
<dbReference type="GO" id="GO:0010283">
    <property type="term" value="F:pinoresinol reductase activity"/>
    <property type="evidence" value="ECO:0007669"/>
    <property type="project" value="UniProtKB-EC"/>
</dbReference>
<dbReference type="GO" id="GO:0009807">
    <property type="term" value="P:lignan biosynthetic process"/>
    <property type="evidence" value="ECO:0007669"/>
    <property type="project" value="UniProtKB-ARBA"/>
</dbReference>
<dbReference type="CDD" id="cd05259">
    <property type="entry name" value="PCBER_SDR_a"/>
    <property type="match status" value="1"/>
</dbReference>
<dbReference type="Gene3D" id="3.40.50.720">
    <property type="entry name" value="NAD(P)-binding Rossmann-like Domain"/>
    <property type="match status" value="1"/>
</dbReference>
<dbReference type="Gene3D" id="3.90.25.10">
    <property type="entry name" value="UDP-galactose 4-epimerase, domain 1"/>
    <property type="match status" value="1"/>
</dbReference>
<dbReference type="InterPro" id="IPR036291">
    <property type="entry name" value="NAD(P)-bd_dom_sf"/>
</dbReference>
<dbReference type="InterPro" id="IPR008030">
    <property type="entry name" value="NmrA-like"/>
</dbReference>
<dbReference type="InterPro" id="IPR050608">
    <property type="entry name" value="NmrA-type/Isoflavone_red_sf"/>
</dbReference>
<dbReference type="InterPro" id="IPR045312">
    <property type="entry name" value="PCBER-like"/>
</dbReference>
<dbReference type="PANTHER" id="PTHR43349:SF4">
    <property type="entry name" value="PINORESINOL REDUCTASE 1-RELATED"/>
    <property type="match status" value="1"/>
</dbReference>
<dbReference type="PANTHER" id="PTHR43349">
    <property type="entry name" value="PINORESINOL REDUCTASE-RELATED"/>
    <property type="match status" value="1"/>
</dbReference>
<dbReference type="Pfam" id="PF05368">
    <property type="entry name" value="NmrA"/>
    <property type="match status" value="1"/>
</dbReference>
<dbReference type="SUPFAM" id="SSF51735">
    <property type="entry name" value="NAD(P)-binding Rossmann-fold domains"/>
    <property type="match status" value="1"/>
</dbReference>
<reference key="1">
    <citation type="journal article" date="1999" name="J. Biol. Chem.">
        <title>Recombinant pinoresinol-lariciresinol reductases from western red cedar (Thuja plicata) catalyze opposite enantiospecific conversions.</title>
        <authorList>
            <person name="Fujita M."/>
            <person name="Gang D.R."/>
            <person name="Davin L.B."/>
            <person name="Lewis N.G."/>
        </authorList>
    </citation>
    <scope>NUCLEOTIDE SEQUENCE [MRNA]</scope>
    <source>
        <tissue>Stem</tissue>
    </source>
</reference>
<proteinExistence type="evidence at transcript level"/>
<sequence>MEESSRILVVGGTGYIGRRIVKASIALGHPTFILFRKEVVSDVEKVEMLLSFKKNGAKLLEASFDDHESLVDAVKQVDVVISAVAGNHMRHHILQQLKLVEAIKEAGNIKRFVPSEFGMDPGLMDHAMAPGNIVFIDKIKVREAIEAAAIPHTYISANIFAGYLVGGLAQLGRVMPPSDKVFLYGDGNVKAVWIDEEDVGIYTIKAIDDPRTLNKTVYIRPPLNVLSQKEVVEKWEKLSRKSLDKIYMSVEDFLAGMEGQSYGEKIGISHFYQMFYKGDLYNFEIGPNGVEASQLYPGVKYTTVDSYMERYL</sequence>
<name>PILR4_THUPL</name>
<organism>
    <name type="scientific">Thuja plicata</name>
    <name type="common">Western red-cedar</name>
    <name type="synonym">Giant arborvitae</name>
    <dbReference type="NCBI Taxonomy" id="3316"/>
    <lineage>
        <taxon>Eukaryota</taxon>
        <taxon>Viridiplantae</taxon>
        <taxon>Streptophyta</taxon>
        <taxon>Embryophyta</taxon>
        <taxon>Tracheophyta</taxon>
        <taxon>Spermatophyta</taxon>
        <taxon>Pinopsida</taxon>
        <taxon>Pinidae</taxon>
        <taxon>Conifers II</taxon>
        <taxon>Cupressales</taxon>
        <taxon>Cupressaceae</taxon>
        <taxon>Thuja</taxon>
    </lineage>
</organism>
<accession>Q9LD12</accession>
<evidence type="ECO:0000250" key="1"/>
<evidence type="ECO:0000250" key="2">
    <source>
        <dbReference type="UniProtKB" id="Q9LD14"/>
    </source>
</evidence>
<evidence type="ECO:0000305" key="3"/>
<comment type="function">
    <text evidence="1">Reductase involved in lignan biosynthesis. Catalyzes the enantioselective sequential conversion of (+)-pinoresinol into (+)-lariciresinol and of (+)-lariciresinol into (-)-secoisolariciresinol. Abstracts the 4R-hydride from the NADPH cofactor during catalysis (By similarity).</text>
</comment>
<comment type="catalytic activity">
    <reaction>
        <text>(+)-lariciresinol + NADP(+) = (+)-pinoresinol + NADPH + H(+)</text>
        <dbReference type="Rhea" id="RHEA:34419"/>
        <dbReference type="ChEBI" id="CHEBI:40"/>
        <dbReference type="ChEBI" id="CHEBI:15378"/>
        <dbReference type="ChEBI" id="CHEBI:57783"/>
        <dbReference type="ChEBI" id="CHEBI:58349"/>
        <dbReference type="ChEBI" id="CHEBI:67246"/>
        <dbReference type="EC" id="1.23.1.1"/>
    </reaction>
</comment>
<comment type="catalytic activity">
    <reaction>
        <text>(-)-secoisolariciresinol + NADP(+) = (+)-lariciresinol + NADPH + H(+)</text>
        <dbReference type="Rhea" id="RHEA:34423"/>
        <dbReference type="ChEBI" id="CHEBI:15378"/>
        <dbReference type="ChEBI" id="CHEBI:57783"/>
        <dbReference type="ChEBI" id="CHEBI:58349"/>
        <dbReference type="ChEBI" id="CHEBI:65004"/>
        <dbReference type="ChEBI" id="CHEBI:67246"/>
        <dbReference type="EC" id="1.23.1.2"/>
    </reaction>
</comment>
<comment type="subunit">
    <text evidence="1">Dimer.</text>
</comment>
<comment type="similarity">
    <text evidence="3">Belongs to the NmrA-type oxidoreductase family. Isoflavone reductase subfamily.</text>
</comment>
<keyword id="KW-0521">NADP</keyword>
<keyword id="KW-0560">Oxidoreductase</keyword>